<feature type="signal peptide" evidence="2">
    <location>
        <begin position="1"/>
        <end position="19"/>
    </location>
</feature>
<feature type="chain" id="PRO_0000302803" description="Proheparin-binding EGF-like growth factor">
    <location>
        <begin position="20"/>
        <end position="208"/>
    </location>
</feature>
<feature type="propeptide" id="PRO_0000007611" description="Or 72, or 73, or 76, or 81" evidence="5">
    <location>
        <begin position="20"/>
        <end position="62"/>
    </location>
</feature>
<feature type="chain" id="PRO_0000007612" description="Heparin-binding EGF-like growth factor">
    <location>
        <begin position="63"/>
        <end position="148"/>
    </location>
</feature>
<feature type="propeptide" id="PRO_0000007613" description="C-terminal" evidence="2">
    <location>
        <begin position="149"/>
        <end position="208"/>
    </location>
</feature>
<feature type="topological domain" description="Extracellular" evidence="2">
    <location>
        <begin position="20"/>
        <end position="160"/>
    </location>
</feature>
<feature type="transmembrane region" description="Helical" evidence="2">
    <location>
        <begin position="161"/>
        <end position="184"/>
    </location>
</feature>
<feature type="topological domain" description="Cytoplasmic" evidence="2">
    <location>
        <begin position="185"/>
        <end position="208"/>
    </location>
</feature>
<feature type="domain" description="EGF-like" evidence="3">
    <location>
        <begin position="104"/>
        <end position="144"/>
    </location>
</feature>
<feature type="region of interest" description="Disordered" evidence="4">
    <location>
        <begin position="33"/>
        <end position="56"/>
    </location>
</feature>
<feature type="region of interest" description="Disordered" evidence="4">
    <location>
        <begin position="82"/>
        <end position="104"/>
    </location>
</feature>
<feature type="compositionally biased region" description="Polar residues" evidence="4">
    <location>
        <begin position="36"/>
        <end position="49"/>
    </location>
</feature>
<feature type="compositionally biased region" description="Basic residues" evidence="4">
    <location>
        <begin position="93"/>
        <end position="102"/>
    </location>
</feature>
<feature type="site" description="Plays a critical role in diphtheria toxin binding and toxin sensitivity" evidence="1">
    <location>
        <position position="141"/>
    </location>
</feature>
<feature type="glycosylation site" description="O-linked (GalNAc...) threonine" evidence="10">
    <location>
        <position position="37"/>
    </location>
</feature>
<feature type="glycosylation site" description="O-linked (GalNAc...) serine" evidence="10">
    <location>
        <position position="38"/>
    </location>
</feature>
<feature type="glycosylation site" description="O-linked (GalNAc...) threonine" evidence="6 7">
    <location>
        <position position="44"/>
    </location>
</feature>
<feature type="glycosylation site" description="O-linked (GalNAc...) threonine" evidence="6">
    <location>
        <position position="47"/>
    </location>
</feature>
<feature type="glycosylation site" description="O-linked (GalNAc...) threonine" evidence="5">
    <location>
        <position position="75"/>
    </location>
</feature>
<feature type="glycosylation site" description="O-linked (GalNAc...) threonine" evidence="5">
    <location>
        <position position="85"/>
    </location>
</feature>
<feature type="disulfide bond" evidence="3">
    <location>
        <begin position="108"/>
        <end position="121"/>
    </location>
</feature>
<feature type="disulfide bond" evidence="3">
    <location>
        <begin position="116"/>
        <end position="132"/>
    </location>
</feature>
<feature type="disulfide bond" evidence="3">
    <location>
        <begin position="134"/>
        <end position="143"/>
    </location>
</feature>
<feature type="turn" evidence="11">
    <location>
        <begin position="108"/>
        <end position="114"/>
    </location>
</feature>
<feature type="strand" evidence="11">
    <location>
        <begin position="117"/>
        <end position="121"/>
    </location>
</feature>
<feature type="turn" evidence="11">
    <location>
        <begin position="125"/>
        <end position="128"/>
    </location>
</feature>
<feature type="strand" evidence="11">
    <location>
        <begin position="132"/>
        <end position="134"/>
    </location>
</feature>
<feature type="strand" evidence="11">
    <location>
        <begin position="138"/>
        <end position="140"/>
    </location>
</feature>
<feature type="strand" evidence="12">
    <location>
        <begin position="188"/>
        <end position="195"/>
    </location>
</feature>
<reference key="1">
    <citation type="journal article" date="1991" name="Science">
        <title>A heparin-binding growth factor secreted by macrophage-like cells that is related to EGF.</title>
        <authorList>
            <person name="Higashiyama S."/>
            <person name="Abraham J.A."/>
            <person name="Miller J."/>
            <person name="Fiddes J.C."/>
            <person name="Klagsbrun M."/>
        </authorList>
    </citation>
    <scope>NUCLEOTIDE SEQUENCE [MRNA]</scope>
    <scope>PROTEIN SEQUENCE OF 73-93</scope>
    <source>
        <tissue>Macrophage</tissue>
    </source>
</reference>
<reference key="2">
    <citation type="submission" date="2002-10" db="EMBL/GenBank/DDBJ databases">
        <authorList>
            <consortium name="NIEHS SNPs program"/>
        </authorList>
    </citation>
    <scope>NUCLEOTIDE SEQUENCE [GENOMIC DNA]</scope>
</reference>
<reference key="3">
    <citation type="journal article" date="2004" name="Nat. Genet.">
        <title>Complete sequencing and characterization of 21,243 full-length human cDNAs.</title>
        <authorList>
            <person name="Ota T."/>
            <person name="Suzuki Y."/>
            <person name="Nishikawa T."/>
            <person name="Otsuki T."/>
            <person name="Sugiyama T."/>
            <person name="Irie R."/>
            <person name="Wakamatsu A."/>
            <person name="Hayashi K."/>
            <person name="Sato H."/>
            <person name="Nagai K."/>
            <person name="Kimura K."/>
            <person name="Makita H."/>
            <person name="Sekine M."/>
            <person name="Obayashi M."/>
            <person name="Nishi T."/>
            <person name="Shibahara T."/>
            <person name="Tanaka T."/>
            <person name="Ishii S."/>
            <person name="Yamamoto J."/>
            <person name="Saito K."/>
            <person name="Kawai Y."/>
            <person name="Isono Y."/>
            <person name="Nakamura Y."/>
            <person name="Nagahari K."/>
            <person name="Murakami K."/>
            <person name="Yasuda T."/>
            <person name="Iwayanagi T."/>
            <person name="Wagatsuma M."/>
            <person name="Shiratori A."/>
            <person name="Sudo H."/>
            <person name="Hosoiri T."/>
            <person name="Kaku Y."/>
            <person name="Kodaira H."/>
            <person name="Kondo H."/>
            <person name="Sugawara M."/>
            <person name="Takahashi M."/>
            <person name="Kanda K."/>
            <person name="Yokoi T."/>
            <person name="Furuya T."/>
            <person name="Kikkawa E."/>
            <person name="Omura Y."/>
            <person name="Abe K."/>
            <person name="Kamihara K."/>
            <person name="Katsuta N."/>
            <person name="Sato K."/>
            <person name="Tanikawa M."/>
            <person name="Yamazaki M."/>
            <person name="Ninomiya K."/>
            <person name="Ishibashi T."/>
            <person name="Yamashita H."/>
            <person name="Murakawa K."/>
            <person name="Fujimori K."/>
            <person name="Tanai H."/>
            <person name="Kimata M."/>
            <person name="Watanabe M."/>
            <person name="Hiraoka S."/>
            <person name="Chiba Y."/>
            <person name="Ishida S."/>
            <person name="Ono Y."/>
            <person name="Takiguchi S."/>
            <person name="Watanabe S."/>
            <person name="Yosida M."/>
            <person name="Hotuta T."/>
            <person name="Kusano J."/>
            <person name="Kanehori K."/>
            <person name="Takahashi-Fujii A."/>
            <person name="Hara H."/>
            <person name="Tanase T.-O."/>
            <person name="Nomura Y."/>
            <person name="Togiya S."/>
            <person name="Komai F."/>
            <person name="Hara R."/>
            <person name="Takeuchi K."/>
            <person name="Arita M."/>
            <person name="Imose N."/>
            <person name="Musashino K."/>
            <person name="Yuuki H."/>
            <person name="Oshima A."/>
            <person name="Sasaki N."/>
            <person name="Aotsuka S."/>
            <person name="Yoshikawa Y."/>
            <person name="Matsunawa H."/>
            <person name="Ichihara T."/>
            <person name="Shiohata N."/>
            <person name="Sano S."/>
            <person name="Moriya S."/>
            <person name="Momiyama H."/>
            <person name="Satoh N."/>
            <person name="Takami S."/>
            <person name="Terashima Y."/>
            <person name="Suzuki O."/>
            <person name="Nakagawa S."/>
            <person name="Senoh A."/>
            <person name="Mizoguchi H."/>
            <person name="Goto Y."/>
            <person name="Shimizu F."/>
            <person name="Wakebe H."/>
            <person name="Hishigaki H."/>
            <person name="Watanabe T."/>
            <person name="Sugiyama A."/>
            <person name="Takemoto M."/>
            <person name="Kawakami B."/>
            <person name="Yamazaki M."/>
            <person name="Watanabe K."/>
            <person name="Kumagai A."/>
            <person name="Itakura S."/>
            <person name="Fukuzumi Y."/>
            <person name="Fujimori Y."/>
            <person name="Komiyama M."/>
            <person name="Tashiro H."/>
            <person name="Tanigami A."/>
            <person name="Fujiwara T."/>
            <person name="Ono T."/>
            <person name="Yamada K."/>
            <person name="Fujii Y."/>
            <person name="Ozaki K."/>
            <person name="Hirao M."/>
            <person name="Ohmori Y."/>
            <person name="Kawabata A."/>
            <person name="Hikiji T."/>
            <person name="Kobatake N."/>
            <person name="Inagaki H."/>
            <person name="Ikema Y."/>
            <person name="Okamoto S."/>
            <person name="Okitani R."/>
            <person name="Kawakami T."/>
            <person name="Noguchi S."/>
            <person name="Itoh T."/>
            <person name="Shigeta K."/>
            <person name="Senba T."/>
            <person name="Matsumura K."/>
            <person name="Nakajima Y."/>
            <person name="Mizuno T."/>
            <person name="Morinaga M."/>
            <person name="Sasaki M."/>
            <person name="Togashi T."/>
            <person name="Oyama M."/>
            <person name="Hata H."/>
            <person name="Watanabe M."/>
            <person name="Komatsu T."/>
            <person name="Mizushima-Sugano J."/>
            <person name="Satoh T."/>
            <person name="Shirai Y."/>
            <person name="Takahashi Y."/>
            <person name="Nakagawa K."/>
            <person name="Okumura K."/>
            <person name="Nagase T."/>
            <person name="Nomura N."/>
            <person name="Kikuchi H."/>
            <person name="Masuho Y."/>
            <person name="Yamashita R."/>
            <person name="Nakai K."/>
            <person name="Yada T."/>
            <person name="Nakamura Y."/>
            <person name="Ohara O."/>
            <person name="Isogai T."/>
            <person name="Sugano S."/>
        </authorList>
    </citation>
    <scope>NUCLEOTIDE SEQUENCE [LARGE SCALE MRNA]</scope>
</reference>
<reference key="4">
    <citation type="journal article" date="2004" name="Nature">
        <title>The DNA sequence and comparative analysis of human chromosome 5.</title>
        <authorList>
            <person name="Schmutz J."/>
            <person name="Martin J."/>
            <person name="Terry A."/>
            <person name="Couronne O."/>
            <person name="Grimwood J."/>
            <person name="Lowry S."/>
            <person name="Gordon L.A."/>
            <person name="Scott D."/>
            <person name="Xie G."/>
            <person name="Huang W."/>
            <person name="Hellsten U."/>
            <person name="Tran-Gyamfi M."/>
            <person name="She X."/>
            <person name="Prabhakar S."/>
            <person name="Aerts A."/>
            <person name="Altherr M."/>
            <person name="Bajorek E."/>
            <person name="Black S."/>
            <person name="Branscomb E."/>
            <person name="Caoile C."/>
            <person name="Challacombe J.F."/>
            <person name="Chan Y.M."/>
            <person name="Denys M."/>
            <person name="Detter J.C."/>
            <person name="Escobar J."/>
            <person name="Flowers D."/>
            <person name="Fotopulos D."/>
            <person name="Glavina T."/>
            <person name="Gomez M."/>
            <person name="Gonzales E."/>
            <person name="Goodstein D."/>
            <person name="Grigoriev I."/>
            <person name="Groza M."/>
            <person name="Hammon N."/>
            <person name="Hawkins T."/>
            <person name="Haydu L."/>
            <person name="Israni S."/>
            <person name="Jett J."/>
            <person name="Kadner K."/>
            <person name="Kimball H."/>
            <person name="Kobayashi A."/>
            <person name="Lopez F."/>
            <person name="Lou Y."/>
            <person name="Martinez D."/>
            <person name="Medina C."/>
            <person name="Morgan J."/>
            <person name="Nandkeshwar R."/>
            <person name="Noonan J.P."/>
            <person name="Pitluck S."/>
            <person name="Pollard M."/>
            <person name="Predki P."/>
            <person name="Priest J."/>
            <person name="Ramirez L."/>
            <person name="Retterer J."/>
            <person name="Rodriguez A."/>
            <person name="Rogers S."/>
            <person name="Salamov A."/>
            <person name="Salazar A."/>
            <person name="Thayer N."/>
            <person name="Tice H."/>
            <person name="Tsai M."/>
            <person name="Ustaszewska A."/>
            <person name="Vo N."/>
            <person name="Wheeler J."/>
            <person name="Wu K."/>
            <person name="Yang J."/>
            <person name="Dickson M."/>
            <person name="Cheng J.-F."/>
            <person name="Eichler E.E."/>
            <person name="Olsen A."/>
            <person name="Pennacchio L.A."/>
            <person name="Rokhsar D.S."/>
            <person name="Richardson P."/>
            <person name="Lucas S.M."/>
            <person name="Myers R.M."/>
            <person name="Rubin E.M."/>
        </authorList>
    </citation>
    <scope>NUCLEOTIDE SEQUENCE [LARGE SCALE GENOMIC DNA]</scope>
</reference>
<reference key="5">
    <citation type="submission" date="2005-09" db="EMBL/GenBank/DDBJ databases">
        <authorList>
            <person name="Mural R.J."/>
            <person name="Istrail S."/>
            <person name="Sutton G.G."/>
            <person name="Florea L."/>
            <person name="Halpern A.L."/>
            <person name="Mobarry C.M."/>
            <person name="Lippert R."/>
            <person name="Walenz B."/>
            <person name="Shatkay H."/>
            <person name="Dew I."/>
            <person name="Miller J.R."/>
            <person name="Flanigan M.J."/>
            <person name="Edwards N.J."/>
            <person name="Bolanos R."/>
            <person name="Fasulo D."/>
            <person name="Halldorsson B.V."/>
            <person name="Hannenhalli S."/>
            <person name="Turner R."/>
            <person name="Yooseph S."/>
            <person name="Lu F."/>
            <person name="Nusskern D.R."/>
            <person name="Shue B.C."/>
            <person name="Zheng X.H."/>
            <person name="Zhong F."/>
            <person name="Delcher A.L."/>
            <person name="Huson D.H."/>
            <person name="Kravitz S.A."/>
            <person name="Mouchard L."/>
            <person name="Reinert K."/>
            <person name="Remington K.A."/>
            <person name="Clark A.G."/>
            <person name="Waterman M.S."/>
            <person name="Eichler E.E."/>
            <person name="Adams M.D."/>
            <person name="Hunkapiller M.W."/>
            <person name="Myers E.W."/>
            <person name="Venter J.C."/>
        </authorList>
    </citation>
    <scope>NUCLEOTIDE SEQUENCE [LARGE SCALE GENOMIC DNA]</scope>
</reference>
<reference key="6">
    <citation type="journal article" date="2004" name="Genome Res.">
        <title>The status, quality, and expansion of the NIH full-length cDNA project: the Mammalian Gene Collection (MGC).</title>
        <authorList>
            <consortium name="The MGC Project Team"/>
        </authorList>
    </citation>
    <scope>NUCLEOTIDE SEQUENCE [LARGE SCALE MRNA]</scope>
    <source>
        <tissue>Eye</tissue>
    </source>
</reference>
<reference key="7">
    <citation type="journal article" date="1992" name="J. Biol. Chem.">
        <title>Structure of heparin-binding EGF-like growth factor. Multiple forms, primary structure, and glycosylation of the mature protein.</title>
        <authorList>
            <person name="Higashiyama S."/>
            <person name="Lau K."/>
            <person name="Besner G.E."/>
            <person name="Abraham J.A."/>
            <person name="Klagsbrun M."/>
        </authorList>
    </citation>
    <scope>PROTEIN SEQUENCE OF 63-141 AND 143-148</scope>
    <scope>GLYCOSYLATION AT THR-75 AND THR-85</scope>
    <source>
        <tissue>Histiocytic lymphoma</tissue>
    </source>
</reference>
<reference key="8">
    <citation type="journal article" date="1995" name="J. Biol. Chem.">
        <title>Diphtheria toxin binds to the epidermal growth factor (EGF)-like domain of human heparin-binding EGF-like growth factor/diphtheria toxin receptor and inhibits specifically its mitogenic activity.</title>
        <authorList>
            <person name="Mitamura T."/>
            <person name="Higashiyama S."/>
            <person name="Taniguchi N."/>
            <person name="Klagsbrun M."/>
            <person name="Mekada E."/>
        </authorList>
    </citation>
    <scope>DOMAIN TOXIN BINDING</scope>
</reference>
<reference key="9">
    <citation type="journal article" date="1997" name="EMBO J.">
        <title>Activation of HER4 by heparin-binding EGF-like growth factor stimulates chemotaxis but not proliferation.</title>
        <authorList>
            <person name="Elenius K."/>
            <person name="Paul S."/>
            <person name="Allison G."/>
            <person name="Sun J."/>
            <person name="Klagsbrun M."/>
        </authorList>
    </citation>
    <scope>INTERACTION WITH ERBB4</scope>
</reference>
<reference key="10">
    <citation type="journal article" date="2006" name="Cell Struct. Funct.">
        <title>ErbB and HB-EGF signaling in heart development and function.</title>
        <authorList>
            <person name="Iwamoto R."/>
            <person name="Mekada E."/>
        </authorList>
    </citation>
    <scope>REVIEW</scope>
</reference>
<reference key="11">
    <citation type="journal article" date="2012" name="Mol. Cell. Proteomics">
        <title>Human urinary glycoproteomics; attachment site specific analysis of N- and O-linked glycosylations by CID and ECD.</title>
        <authorList>
            <person name="Halim A."/>
            <person name="Nilsson J."/>
            <person name="Ruetschi U."/>
            <person name="Hesse C."/>
            <person name="Larson G."/>
        </authorList>
    </citation>
    <scope>GLYCOSYLATION AT THR-44 AND THR-47</scope>
    <scope>STRUCTURE OF CARBOHYDRATES</scope>
    <scope>IDENTIFICATION BY MASS SPECTROMETRY</scope>
</reference>
<reference key="12">
    <citation type="journal article" date="2013" name="J. Proteome Res.">
        <title>LC-MS/MS characterization of O-glycosylation sites and glycan structures of human cerebrospinal fluid glycoproteins.</title>
        <authorList>
            <person name="Halim A."/>
            <person name="Ruetschi U."/>
            <person name="Larson G."/>
            <person name="Nilsson J."/>
        </authorList>
    </citation>
    <scope>GLYCOSYLATION AT THR-37; SER-38 AND THR-44</scope>
    <scope>IDENTIFICATION BY MASS SPECTROMETRY</scope>
</reference>
<reference key="13">
    <citation type="journal article" date="1997" name="Mol. Cell">
        <title>Crystal structure of the complex of diphtheria toxin with an extracellular fragment of its receptor.</title>
        <authorList>
            <person name="Louie G.V."/>
            <person name="Yang W."/>
            <person name="Bowman M.E."/>
            <person name="Choe S."/>
        </authorList>
    </citation>
    <scope>X-RAY CRYSTALLOGRAPHY (2.65 ANGSTROMS) OF 73-147 IN COMPLEX WITH TOX</scope>
</reference>
<comment type="function">
    <text>Growth factor that mediates its effects via EGFR, ERBB2 and ERBB4. Required for normal cardiac valve formation and normal heart function. Promotes smooth muscle cell proliferation. May be involved in macrophage-mediated cellular proliferation. It is mitogenic for fibroblasts, but not endothelial cells. It is able to bind EGF receptor/EGFR with higher affinity than EGF itself and is a far more potent mitogen for smooth muscle cells than EGF. Also acts as a diphtheria toxin receptor.</text>
</comment>
<comment type="subunit">
    <text evidence="1 8 9">Interacts with FBLN1 (By similarity). Interacts with EGFR and ERBB4.</text>
</comment>
<comment type="interaction">
    <interactant intactId="EBI-7211558">
        <id>Q99075</id>
    </interactant>
    <interactant intactId="EBI-297353">
        <id>P00533</id>
        <label>EGFR</label>
    </interactant>
    <organismsDiffer>false</organismsDiffer>
    <experiments>3</experiments>
</comment>
<comment type="interaction">
    <interactant intactId="EBI-7211558">
        <id>Q99075</id>
    </interactant>
    <interactant intactId="EBI-80371">
        <id>Q15303</id>
        <label>ERBB4</label>
    </interactant>
    <organismsDiffer>false</organismsDiffer>
    <experiments>2</experiments>
</comment>
<comment type="interaction">
    <interactant intactId="EBI-7211558">
        <id>Q99075</id>
    </interactant>
    <interactant intactId="EBI-348399">
        <id>P22607</id>
        <label>FGFR3</label>
    </interactant>
    <organismsDiffer>false</organismsDiffer>
    <experiments>3</experiments>
</comment>
<comment type="interaction">
    <interactant intactId="EBI-7211558">
        <id>Q99075</id>
    </interactant>
    <interactant intactId="EBI-351506">
        <id>P06396</id>
        <label>GSN</label>
    </interactant>
    <organismsDiffer>false</organismsDiffer>
    <experiments>3</experiments>
</comment>
<comment type="subcellular location">
    <molecule>Heparin-binding EGF-like growth factor</molecule>
    <subcellularLocation>
        <location>Secreted</location>
        <location>Extracellular space</location>
    </subcellularLocation>
    <text>Mature HB-EGF is released into the extracellular space and probably binds to a receptor.</text>
</comment>
<comment type="subcellular location">
    <molecule>Proheparin-binding EGF-like growth factor</molecule>
    <subcellularLocation>
        <location>Cell membrane</location>
        <topology>Single-pass type I membrane protein</topology>
    </subcellularLocation>
</comment>
<comment type="PTM">
    <text>Several N-termini have been identified by direct sequencing. The forms with N-termini 63, 73 and 74 have been tested and found to be biologically active.</text>
</comment>
<comment type="PTM">
    <text evidence="5 6 7">O-glycosylated with core 1 or possibly core 8 glycans. Thr-47 is a minor glycosylation site compared to Thr-44.</text>
</comment>
<keyword id="KW-0002">3D-structure</keyword>
<keyword id="KW-1003">Cell membrane</keyword>
<keyword id="KW-0903">Direct protein sequencing</keyword>
<keyword id="KW-1015">Disulfide bond</keyword>
<keyword id="KW-0245">EGF-like domain</keyword>
<keyword id="KW-0325">Glycoprotein</keyword>
<keyword id="KW-0339">Growth factor</keyword>
<keyword id="KW-0358">Heparin-binding</keyword>
<keyword id="KW-0472">Membrane</keyword>
<keyword id="KW-1267">Proteomics identification</keyword>
<keyword id="KW-0675">Receptor</keyword>
<keyword id="KW-1185">Reference proteome</keyword>
<keyword id="KW-0964">Secreted</keyword>
<keyword id="KW-0732">Signal</keyword>
<keyword id="KW-0812">Transmembrane</keyword>
<keyword id="KW-1133">Transmembrane helix</keyword>
<gene>
    <name type="primary">HBEGF</name>
    <name type="synonym">DTR</name>
    <name type="synonym">DTS</name>
    <name type="synonym">HEGFL</name>
</gene>
<protein>
    <recommendedName>
        <fullName>Proheparin-binding EGF-like growth factor</fullName>
    </recommendedName>
    <component>
        <recommendedName>
            <fullName>Heparin-binding EGF-like growth factor</fullName>
            <shortName>HB-EGF</shortName>
            <shortName>HBEGF</shortName>
        </recommendedName>
        <alternativeName>
            <fullName>Diphtheria toxin receptor</fullName>
            <shortName>DT-R</shortName>
        </alternativeName>
    </component>
</protein>
<proteinExistence type="evidence at protein level"/>
<sequence length="208" mass="23067">MKLLPSVVLKLFLAAVLSALVTGESLERLRRGLAAGTSNPDPPTVSTDQLLPLGGGRDRKVRDLQEADLDLLRVTLSSKPQALATPNKEEHGKRKKKGKGLGKKRDPCLRKYKDFCIHGECKYVKELRAPSCICHPGYHGERCHGLSLPVENRLYTYDHTTILAVVAVVLSSVCLLVIVGLLMFRYHRRGGYDVENEEKVKLGMTNSH</sequence>
<evidence type="ECO:0000250" key="1"/>
<evidence type="ECO:0000255" key="2"/>
<evidence type="ECO:0000255" key="3">
    <source>
        <dbReference type="PROSITE-ProRule" id="PRU00076"/>
    </source>
</evidence>
<evidence type="ECO:0000256" key="4">
    <source>
        <dbReference type="SAM" id="MobiDB-lite"/>
    </source>
</evidence>
<evidence type="ECO:0000269" key="5">
    <source>
    </source>
</evidence>
<evidence type="ECO:0000269" key="6">
    <source>
    </source>
</evidence>
<evidence type="ECO:0000269" key="7">
    <source>
    </source>
</evidence>
<evidence type="ECO:0000269" key="8">
    <source>
    </source>
</evidence>
<evidence type="ECO:0000269" key="9">
    <source>
    </source>
</evidence>
<evidence type="ECO:0000305" key="10">
    <source>
    </source>
</evidence>
<evidence type="ECO:0007829" key="11">
    <source>
        <dbReference type="PDB" id="1XDT"/>
    </source>
</evidence>
<evidence type="ECO:0007829" key="12">
    <source>
        <dbReference type="PDB" id="2M8S"/>
    </source>
</evidence>
<dbReference type="EMBL" id="M60278">
    <property type="protein sequence ID" value="AAA35956.1"/>
    <property type="molecule type" value="mRNA"/>
</dbReference>
<dbReference type="EMBL" id="AY164533">
    <property type="protein sequence ID" value="AAN46738.1"/>
    <property type="molecule type" value="Genomic_DNA"/>
</dbReference>
<dbReference type="EMBL" id="AK313202">
    <property type="protein sequence ID" value="BAG36018.1"/>
    <property type="molecule type" value="mRNA"/>
</dbReference>
<dbReference type="EMBL" id="AC004634">
    <property type="protein sequence ID" value="AAC15470.1"/>
    <property type="molecule type" value="Genomic_DNA"/>
</dbReference>
<dbReference type="EMBL" id="CH471062">
    <property type="protein sequence ID" value="EAW62069.1"/>
    <property type="molecule type" value="Genomic_DNA"/>
</dbReference>
<dbReference type="EMBL" id="BC033097">
    <property type="protein sequence ID" value="AAH33097.1"/>
    <property type="molecule type" value="mRNA"/>
</dbReference>
<dbReference type="CCDS" id="CCDS4223.1"/>
<dbReference type="PIR" id="A38432">
    <property type="entry name" value="A38432"/>
</dbReference>
<dbReference type="RefSeq" id="NP_001936.1">
    <property type="nucleotide sequence ID" value="NM_001945.3"/>
</dbReference>
<dbReference type="PDB" id="1XDT">
    <property type="method" value="X-ray"/>
    <property type="resolution" value="2.65 A"/>
    <property type="chains" value="R=73-147"/>
</dbReference>
<dbReference type="PDB" id="2M8S">
    <property type="method" value="NMR"/>
    <property type="chains" value="B=185-208"/>
</dbReference>
<dbReference type="PDBsum" id="1XDT"/>
<dbReference type="PDBsum" id="2M8S"/>
<dbReference type="SMR" id="Q99075"/>
<dbReference type="BioGRID" id="108172">
    <property type="interactions" value="16"/>
</dbReference>
<dbReference type="DIP" id="DIP-114N"/>
<dbReference type="FunCoup" id="Q99075">
    <property type="interactions" value="527"/>
</dbReference>
<dbReference type="IntAct" id="Q99075">
    <property type="interactions" value="10"/>
</dbReference>
<dbReference type="MINT" id="Q99075"/>
<dbReference type="STRING" id="9606.ENSP00000230990"/>
<dbReference type="BindingDB" id="Q99075"/>
<dbReference type="ChEMBL" id="CHEMBL3286070"/>
<dbReference type="GlyConnect" id="809">
    <property type="glycosylation" value="7 O-Linked glycans (4 sites)"/>
</dbReference>
<dbReference type="GlyCosmos" id="Q99075">
    <property type="glycosylation" value="7 sites, 6 glycans"/>
</dbReference>
<dbReference type="GlyGen" id="Q99075">
    <property type="glycosylation" value="10 sites, 6 O-linked glycans (9 sites)"/>
</dbReference>
<dbReference type="iPTMnet" id="Q99075"/>
<dbReference type="PhosphoSitePlus" id="Q99075"/>
<dbReference type="BioMuta" id="HBEGF"/>
<dbReference type="DMDM" id="544477"/>
<dbReference type="jPOST" id="Q99075"/>
<dbReference type="MassIVE" id="Q99075"/>
<dbReference type="PaxDb" id="9606-ENSP00000230990"/>
<dbReference type="PeptideAtlas" id="Q99075"/>
<dbReference type="ProteomicsDB" id="78230"/>
<dbReference type="Pumba" id="Q99075"/>
<dbReference type="ABCD" id="Q99075">
    <property type="antibodies" value="9 sequenced antibodies"/>
</dbReference>
<dbReference type="Antibodypedia" id="26845">
    <property type="antibodies" value="462 antibodies from 35 providers"/>
</dbReference>
<dbReference type="DNASU" id="1839"/>
<dbReference type="Ensembl" id="ENST00000230990.7">
    <property type="protein sequence ID" value="ENSP00000230990.6"/>
    <property type="gene ID" value="ENSG00000113070.8"/>
</dbReference>
<dbReference type="GeneID" id="1839"/>
<dbReference type="KEGG" id="hsa:1839"/>
<dbReference type="MANE-Select" id="ENST00000230990.7">
    <property type="protein sequence ID" value="ENSP00000230990.6"/>
    <property type="RefSeq nucleotide sequence ID" value="NM_001945.3"/>
    <property type="RefSeq protein sequence ID" value="NP_001936.1"/>
</dbReference>
<dbReference type="UCSC" id="uc003lfi.4">
    <property type="organism name" value="human"/>
</dbReference>
<dbReference type="AGR" id="HGNC:3059"/>
<dbReference type="CTD" id="1839"/>
<dbReference type="DisGeNET" id="1839"/>
<dbReference type="GeneCards" id="HBEGF"/>
<dbReference type="HGNC" id="HGNC:3059">
    <property type="gene designation" value="HBEGF"/>
</dbReference>
<dbReference type="HPA" id="ENSG00000113070">
    <property type="expression patterns" value="Tissue enhanced (urinary)"/>
</dbReference>
<dbReference type="MalaCards" id="HBEGF"/>
<dbReference type="MIM" id="126150">
    <property type="type" value="gene"/>
</dbReference>
<dbReference type="neXtProt" id="NX_Q99075"/>
<dbReference type="OpenTargets" id="ENSG00000113070"/>
<dbReference type="PharmGKB" id="PA27513"/>
<dbReference type="VEuPathDB" id="HostDB:ENSG00000113070"/>
<dbReference type="eggNOG" id="ENOG502S0ZP">
    <property type="taxonomic scope" value="Eukaryota"/>
</dbReference>
<dbReference type="GeneTree" id="ENSGT00940000156901"/>
<dbReference type="HOGENOM" id="CLU_096527_2_0_1"/>
<dbReference type="InParanoid" id="Q99075"/>
<dbReference type="OMA" id="PSCICQE"/>
<dbReference type="OrthoDB" id="8780145at2759"/>
<dbReference type="PAN-GO" id="Q99075">
    <property type="GO annotations" value="8 GO annotations based on evolutionary models"/>
</dbReference>
<dbReference type="PhylomeDB" id="Q99075"/>
<dbReference type="TreeFam" id="TF332773"/>
<dbReference type="PathwayCommons" id="Q99075"/>
<dbReference type="Reactome" id="R-HSA-1227986">
    <property type="pathway name" value="Signaling by ERBB2"/>
</dbReference>
<dbReference type="Reactome" id="R-HSA-1236394">
    <property type="pathway name" value="Signaling by ERBB4"/>
</dbReference>
<dbReference type="Reactome" id="R-HSA-1250196">
    <property type="pathway name" value="SHC1 events in ERBB2 signaling"/>
</dbReference>
<dbReference type="Reactome" id="R-HSA-1250342">
    <property type="pathway name" value="PI3K events in ERBB4 signaling"/>
</dbReference>
<dbReference type="Reactome" id="R-HSA-1250347">
    <property type="pathway name" value="SHC1 events in ERBB4 signaling"/>
</dbReference>
<dbReference type="Reactome" id="R-HSA-1251985">
    <property type="pathway name" value="Nuclear signaling by ERBB4"/>
</dbReference>
<dbReference type="Reactome" id="R-HSA-1257604">
    <property type="pathway name" value="PIP3 activates AKT signaling"/>
</dbReference>
<dbReference type="Reactome" id="R-HSA-177929">
    <property type="pathway name" value="Signaling by EGFR"/>
</dbReference>
<dbReference type="Reactome" id="R-HSA-179812">
    <property type="pathway name" value="GRB2 events in EGFR signaling"/>
</dbReference>
<dbReference type="Reactome" id="R-HSA-180292">
    <property type="pathway name" value="GAB1 signalosome"/>
</dbReference>
<dbReference type="Reactome" id="R-HSA-180336">
    <property type="pathway name" value="SHC1 events in EGFR signaling"/>
</dbReference>
<dbReference type="Reactome" id="R-HSA-182971">
    <property type="pathway name" value="EGFR downregulation"/>
</dbReference>
<dbReference type="Reactome" id="R-HSA-1963640">
    <property type="pathway name" value="GRB2 events in ERBB2 signaling"/>
</dbReference>
<dbReference type="Reactome" id="R-HSA-1963642">
    <property type="pathway name" value="PI3K events in ERBB2 signaling"/>
</dbReference>
<dbReference type="Reactome" id="R-HSA-212718">
    <property type="pathway name" value="EGFR interacts with phospholipase C-gamma"/>
</dbReference>
<dbReference type="Reactome" id="R-HSA-2179392">
    <property type="pathway name" value="EGFR Transactivation by Gastrin"/>
</dbReference>
<dbReference type="Reactome" id="R-HSA-2219530">
    <property type="pathway name" value="Constitutive Signaling by Aberrant PI3K in Cancer"/>
</dbReference>
<dbReference type="Reactome" id="R-HSA-5336415">
    <property type="pathway name" value="Uptake and function of diphtheria toxin"/>
</dbReference>
<dbReference type="Reactome" id="R-HSA-5638303">
    <property type="pathway name" value="Inhibition of Signaling by Overexpressed EGFR"/>
</dbReference>
<dbReference type="Reactome" id="R-HSA-5673001">
    <property type="pathway name" value="RAF/MAP kinase cascade"/>
</dbReference>
<dbReference type="Reactome" id="R-HSA-6785631">
    <property type="pathway name" value="ERBB2 Regulates Cell Motility"/>
</dbReference>
<dbReference type="Reactome" id="R-HSA-6811558">
    <property type="pathway name" value="PI5P, PP2A and IER3 Regulate PI3K/AKT Signaling"/>
</dbReference>
<dbReference type="Reactome" id="R-HSA-8847993">
    <property type="pathway name" value="ERBB2 Activates PTK6 Signaling"/>
</dbReference>
<dbReference type="Reactome" id="R-HSA-8856825">
    <property type="pathway name" value="Cargo recognition for clathrin-mediated endocytosis"/>
</dbReference>
<dbReference type="Reactome" id="R-HSA-8856828">
    <property type="pathway name" value="Clathrin-mediated endocytosis"/>
</dbReference>
<dbReference type="Reactome" id="R-HSA-8857538">
    <property type="pathway name" value="PTK6 promotes HIF1A stabilization"/>
</dbReference>
<dbReference type="Reactome" id="R-HSA-8863795">
    <property type="pathway name" value="Downregulation of ERBB2 signaling"/>
</dbReference>
<dbReference type="Reactome" id="R-HSA-9009391">
    <property type="pathway name" value="Extra-nuclear estrogen signaling"/>
</dbReference>
<dbReference type="Reactome" id="R-HSA-9634638">
    <property type="pathway name" value="Estrogen-dependent nuclear events downstream of ESR-membrane signaling"/>
</dbReference>
<dbReference type="Reactome" id="R-HSA-9664565">
    <property type="pathway name" value="Signaling by ERBB2 KD Mutants"/>
</dbReference>
<dbReference type="Reactome" id="R-HSA-9665686">
    <property type="pathway name" value="Signaling by ERBB2 TMD/JMD mutants"/>
</dbReference>
<dbReference type="SignaLink" id="Q99075"/>
<dbReference type="SIGNOR" id="Q99075"/>
<dbReference type="BioGRID-ORCS" id="1839">
    <property type="hits" value="11 hits in 1149 CRISPR screens"/>
</dbReference>
<dbReference type="CD-CODE" id="8C2F96ED">
    <property type="entry name" value="Centrosome"/>
</dbReference>
<dbReference type="ChiTaRS" id="HBEGF">
    <property type="organism name" value="human"/>
</dbReference>
<dbReference type="EvolutionaryTrace" id="Q99075"/>
<dbReference type="GeneWiki" id="Heparin-binding_EGF-like_growth_factor"/>
<dbReference type="GenomeRNAi" id="1839"/>
<dbReference type="Pharos" id="Q99075">
    <property type="development level" value="Tbio"/>
</dbReference>
<dbReference type="PRO" id="PR:Q99075"/>
<dbReference type="Proteomes" id="UP000005640">
    <property type="component" value="Chromosome 5"/>
</dbReference>
<dbReference type="RNAct" id="Q99075">
    <property type="molecule type" value="protein"/>
</dbReference>
<dbReference type="Bgee" id="ENSG00000113070">
    <property type="expression patterns" value="Expressed in synovial joint and 174 other cell types or tissues"/>
</dbReference>
<dbReference type="GO" id="GO:0009986">
    <property type="term" value="C:cell surface"/>
    <property type="evidence" value="ECO:0000314"/>
    <property type="project" value="BHF-UCL"/>
</dbReference>
<dbReference type="GO" id="GO:0030669">
    <property type="term" value="C:clathrin-coated endocytic vesicle membrane"/>
    <property type="evidence" value="ECO:0000304"/>
    <property type="project" value="Reactome"/>
</dbReference>
<dbReference type="GO" id="GO:0030666">
    <property type="term" value="C:endocytic vesicle membrane"/>
    <property type="evidence" value="ECO:0000304"/>
    <property type="project" value="Reactome"/>
</dbReference>
<dbReference type="GO" id="GO:0005576">
    <property type="term" value="C:extracellular region"/>
    <property type="evidence" value="ECO:0000304"/>
    <property type="project" value="Reactome"/>
</dbReference>
<dbReference type="GO" id="GO:0005615">
    <property type="term" value="C:extracellular space"/>
    <property type="evidence" value="ECO:0000314"/>
    <property type="project" value="BHF-UCL"/>
</dbReference>
<dbReference type="GO" id="GO:0005886">
    <property type="term" value="C:plasma membrane"/>
    <property type="evidence" value="ECO:0000250"/>
    <property type="project" value="BHF-UCL"/>
</dbReference>
<dbReference type="GO" id="GO:0005154">
    <property type="term" value="F:epidermal growth factor receptor binding"/>
    <property type="evidence" value="ECO:0000318"/>
    <property type="project" value="GO_Central"/>
</dbReference>
<dbReference type="GO" id="GO:0008083">
    <property type="term" value="F:growth factor activity"/>
    <property type="evidence" value="ECO:0000314"/>
    <property type="project" value="UniProtKB"/>
</dbReference>
<dbReference type="GO" id="GO:0008201">
    <property type="term" value="F:heparin binding"/>
    <property type="evidence" value="ECO:0000315"/>
    <property type="project" value="UniProtKB"/>
</dbReference>
<dbReference type="GO" id="GO:0048018">
    <property type="term" value="F:receptor ligand activity"/>
    <property type="evidence" value="ECO:0000314"/>
    <property type="project" value="MGI"/>
</dbReference>
<dbReference type="GO" id="GO:0030297">
    <property type="term" value="F:transmembrane receptor protein tyrosine kinase activator activity"/>
    <property type="evidence" value="ECO:0000314"/>
    <property type="project" value="MGI"/>
</dbReference>
<dbReference type="GO" id="GO:0060326">
    <property type="term" value="P:cell chemotaxis"/>
    <property type="evidence" value="ECO:0000315"/>
    <property type="project" value="UniProtKB"/>
</dbReference>
<dbReference type="GO" id="GO:0007173">
    <property type="term" value="P:epidermal growth factor receptor signaling pathway"/>
    <property type="evidence" value="ECO:0000314"/>
    <property type="project" value="MGI"/>
</dbReference>
<dbReference type="GO" id="GO:0038134">
    <property type="term" value="P:ERBB2-EGFR signaling pathway"/>
    <property type="evidence" value="ECO:0007669"/>
    <property type="project" value="Ensembl"/>
</dbReference>
<dbReference type="GO" id="GO:0038135">
    <property type="term" value="P:ERBB2-ERBB4 signaling pathway"/>
    <property type="evidence" value="ECO:0007669"/>
    <property type="project" value="Ensembl"/>
</dbReference>
<dbReference type="GO" id="GO:0007517">
    <property type="term" value="P:muscle organ development"/>
    <property type="evidence" value="ECO:0000304"/>
    <property type="project" value="ProtInc"/>
</dbReference>
<dbReference type="GO" id="GO:0030307">
    <property type="term" value="P:positive regulation of cell growth"/>
    <property type="evidence" value="ECO:0007669"/>
    <property type="project" value="Ensembl"/>
</dbReference>
<dbReference type="GO" id="GO:0030335">
    <property type="term" value="P:positive regulation of cell migration"/>
    <property type="evidence" value="ECO:0000315"/>
    <property type="project" value="BHF-UCL"/>
</dbReference>
<dbReference type="GO" id="GO:0008284">
    <property type="term" value="P:positive regulation of cell population proliferation"/>
    <property type="evidence" value="ECO:0000318"/>
    <property type="project" value="GO_Central"/>
</dbReference>
<dbReference type="GO" id="GO:0051549">
    <property type="term" value="P:positive regulation of keratinocyte migration"/>
    <property type="evidence" value="ECO:0007669"/>
    <property type="project" value="Ensembl"/>
</dbReference>
<dbReference type="GO" id="GO:0051897">
    <property type="term" value="P:positive regulation of phosphatidylinositol 3-kinase/protein kinase B signal transduction"/>
    <property type="evidence" value="ECO:0000315"/>
    <property type="project" value="BHF-UCL"/>
</dbReference>
<dbReference type="GO" id="GO:0048661">
    <property type="term" value="P:positive regulation of smooth muscle cell proliferation"/>
    <property type="evidence" value="ECO:0007669"/>
    <property type="project" value="Ensembl"/>
</dbReference>
<dbReference type="GO" id="GO:0090303">
    <property type="term" value="P:positive regulation of wound healing"/>
    <property type="evidence" value="ECO:0000315"/>
    <property type="project" value="BHF-UCL"/>
</dbReference>
<dbReference type="GO" id="GO:0008016">
    <property type="term" value="P:regulation of heart contraction"/>
    <property type="evidence" value="ECO:0007669"/>
    <property type="project" value="Ensembl"/>
</dbReference>
<dbReference type="GO" id="GO:0007165">
    <property type="term" value="P:signal transduction"/>
    <property type="evidence" value="ECO:0000304"/>
    <property type="project" value="ProtInc"/>
</dbReference>
<dbReference type="GO" id="GO:0035313">
    <property type="term" value="P:wound healing, spreading of epidermal cells"/>
    <property type="evidence" value="ECO:0007669"/>
    <property type="project" value="Ensembl"/>
</dbReference>
<dbReference type="DisProt" id="DP01873"/>
<dbReference type="FunFam" id="2.10.25.10:FF:000158">
    <property type="entry name" value="proheparin-binding EGF-like growth factor"/>
    <property type="match status" value="1"/>
</dbReference>
<dbReference type="Gene3D" id="2.10.25.10">
    <property type="entry name" value="Laminin"/>
    <property type="match status" value="1"/>
</dbReference>
<dbReference type="IDEAL" id="IID00579"/>
<dbReference type="InterPro" id="IPR000742">
    <property type="entry name" value="EGF-like_dom"/>
</dbReference>
<dbReference type="PANTHER" id="PTHR10740:SF4">
    <property type="entry name" value="PROHEPARIN-BINDING EGF-LIKE GROWTH FACTOR"/>
    <property type="match status" value="1"/>
</dbReference>
<dbReference type="PANTHER" id="PTHR10740">
    <property type="entry name" value="TRANSFORMING GROWTH FACTOR ALPHA"/>
    <property type="match status" value="1"/>
</dbReference>
<dbReference type="SUPFAM" id="SSF57196">
    <property type="entry name" value="EGF/Laminin"/>
    <property type="match status" value="1"/>
</dbReference>
<dbReference type="PROSITE" id="PS00022">
    <property type="entry name" value="EGF_1"/>
    <property type="match status" value="1"/>
</dbReference>
<dbReference type="PROSITE" id="PS01186">
    <property type="entry name" value="EGF_2"/>
    <property type="match status" value="1"/>
</dbReference>
<dbReference type="PROSITE" id="PS50026">
    <property type="entry name" value="EGF_3"/>
    <property type="match status" value="1"/>
</dbReference>
<name>HBEGF_HUMAN</name>
<organism>
    <name type="scientific">Homo sapiens</name>
    <name type="common">Human</name>
    <dbReference type="NCBI Taxonomy" id="9606"/>
    <lineage>
        <taxon>Eukaryota</taxon>
        <taxon>Metazoa</taxon>
        <taxon>Chordata</taxon>
        <taxon>Craniata</taxon>
        <taxon>Vertebrata</taxon>
        <taxon>Euteleostomi</taxon>
        <taxon>Mammalia</taxon>
        <taxon>Eutheria</taxon>
        <taxon>Euarchontoglires</taxon>
        <taxon>Primates</taxon>
        <taxon>Haplorrhini</taxon>
        <taxon>Catarrhini</taxon>
        <taxon>Hominidae</taxon>
        <taxon>Homo</taxon>
    </lineage>
</organism>
<accession>Q99075</accession>
<accession>B2R821</accession>